<gene>
    <name evidence="1" type="primary">rplX</name>
    <name type="ordered locus">LCA_1753</name>
</gene>
<reference key="1">
    <citation type="journal article" date="2005" name="Nat. Biotechnol.">
        <title>The complete genome sequence of the meat-borne lactic acid bacterium Lactobacillus sakei 23K.</title>
        <authorList>
            <person name="Chaillou S."/>
            <person name="Champomier-Verges M.-C."/>
            <person name="Cornet M."/>
            <person name="Crutz-Le Coq A.-M."/>
            <person name="Dudez A.-M."/>
            <person name="Martin V."/>
            <person name="Beaufils S."/>
            <person name="Darbon-Rongere E."/>
            <person name="Bossy R."/>
            <person name="Loux V."/>
            <person name="Zagorec M."/>
        </authorList>
    </citation>
    <scope>NUCLEOTIDE SEQUENCE [LARGE SCALE GENOMIC DNA]</scope>
    <source>
        <strain>23K</strain>
    </source>
</reference>
<sequence length="103" mass="11034">MFVKTGDKVKVISGKDKGKEGTIIKAMPKEGRVVVEGINTIKKHVKPNAQNPNGGIVDTEASIDASNVMLIDPSNNEATRVGYKVVDGKKVRVSKKTGESIDK</sequence>
<accession>Q38US3</accession>
<protein>
    <recommendedName>
        <fullName evidence="1">Large ribosomal subunit protein uL24</fullName>
    </recommendedName>
    <alternativeName>
        <fullName evidence="2">50S ribosomal protein L24</fullName>
    </alternativeName>
</protein>
<keyword id="KW-1185">Reference proteome</keyword>
<keyword id="KW-0687">Ribonucleoprotein</keyword>
<keyword id="KW-0689">Ribosomal protein</keyword>
<keyword id="KW-0694">RNA-binding</keyword>
<keyword id="KW-0699">rRNA-binding</keyword>
<evidence type="ECO:0000255" key="1">
    <source>
        <dbReference type="HAMAP-Rule" id="MF_01326"/>
    </source>
</evidence>
<evidence type="ECO:0000305" key="2"/>
<organism>
    <name type="scientific">Latilactobacillus sakei subsp. sakei (strain 23K)</name>
    <name type="common">Lactobacillus sakei subsp. sakei</name>
    <dbReference type="NCBI Taxonomy" id="314315"/>
    <lineage>
        <taxon>Bacteria</taxon>
        <taxon>Bacillati</taxon>
        <taxon>Bacillota</taxon>
        <taxon>Bacilli</taxon>
        <taxon>Lactobacillales</taxon>
        <taxon>Lactobacillaceae</taxon>
        <taxon>Latilactobacillus</taxon>
    </lineage>
</organism>
<dbReference type="EMBL" id="CR936503">
    <property type="protein sequence ID" value="CAI56061.1"/>
    <property type="molecule type" value="Genomic_DNA"/>
</dbReference>
<dbReference type="RefSeq" id="WP_011375441.1">
    <property type="nucleotide sequence ID" value="NC_007576.1"/>
</dbReference>
<dbReference type="SMR" id="Q38US3"/>
<dbReference type="STRING" id="314315.LCA_1753"/>
<dbReference type="GeneID" id="57132670"/>
<dbReference type="KEGG" id="lsa:LCA_1753"/>
<dbReference type="eggNOG" id="COG0198">
    <property type="taxonomic scope" value="Bacteria"/>
</dbReference>
<dbReference type="HOGENOM" id="CLU_093315_2_0_9"/>
<dbReference type="OrthoDB" id="9807419at2"/>
<dbReference type="Proteomes" id="UP000002707">
    <property type="component" value="Chromosome"/>
</dbReference>
<dbReference type="GO" id="GO:1990904">
    <property type="term" value="C:ribonucleoprotein complex"/>
    <property type="evidence" value="ECO:0007669"/>
    <property type="project" value="UniProtKB-KW"/>
</dbReference>
<dbReference type="GO" id="GO:0005840">
    <property type="term" value="C:ribosome"/>
    <property type="evidence" value="ECO:0007669"/>
    <property type="project" value="UniProtKB-KW"/>
</dbReference>
<dbReference type="GO" id="GO:0019843">
    <property type="term" value="F:rRNA binding"/>
    <property type="evidence" value="ECO:0007669"/>
    <property type="project" value="UniProtKB-UniRule"/>
</dbReference>
<dbReference type="GO" id="GO:0003735">
    <property type="term" value="F:structural constituent of ribosome"/>
    <property type="evidence" value="ECO:0007669"/>
    <property type="project" value="InterPro"/>
</dbReference>
<dbReference type="GO" id="GO:0006412">
    <property type="term" value="P:translation"/>
    <property type="evidence" value="ECO:0007669"/>
    <property type="project" value="UniProtKB-UniRule"/>
</dbReference>
<dbReference type="CDD" id="cd06089">
    <property type="entry name" value="KOW_RPL26"/>
    <property type="match status" value="1"/>
</dbReference>
<dbReference type="FunFam" id="2.30.30.30:FF:000004">
    <property type="entry name" value="50S ribosomal protein L24"/>
    <property type="match status" value="1"/>
</dbReference>
<dbReference type="Gene3D" id="2.30.30.30">
    <property type="match status" value="1"/>
</dbReference>
<dbReference type="HAMAP" id="MF_01326_B">
    <property type="entry name" value="Ribosomal_uL24_B"/>
    <property type="match status" value="1"/>
</dbReference>
<dbReference type="InterPro" id="IPR005824">
    <property type="entry name" value="KOW"/>
</dbReference>
<dbReference type="InterPro" id="IPR014722">
    <property type="entry name" value="Rib_uL2_dom2"/>
</dbReference>
<dbReference type="InterPro" id="IPR003256">
    <property type="entry name" value="Ribosomal_uL24"/>
</dbReference>
<dbReference type="InterPro" id="IPR005825">
    <property type="entry name" value="Ribosomal_uL24_CS"/>
</dbReference>
<dbReference type="InterPro" id="IPR041988">
    <property type="entry name" value="Ribosomal_uL24_KOW"/>
</dbReference>
<dbReference type="InterPro" id="IPR008991">
    <property type="entry name" value="Translation_prot_SH3-like_sf"/>
</dbReference>
<dbReference type="NCBIfam" id="TIGR01079">
    <property type="entry name" value="rplX_bact"/>
    <property type="match status" value="1"/>
</dbReference>
<dbReference type="PANTHER" id="PTHR12903">
    <property type="entry name" value="MITOCHONDRIAL RIBOSOMAL PROTEIN L24"/>
    <property type="match status" value="1"/>
</dbReference>
<dbReference type="Pfam" id="PF00467">
    <property type="entry name" value="KOW"/>
    <property type="match status" value="1"/>
</dbReference>
<dbReference type="Pfam" id="PF17136">
    <property type="entry name" value="ribosomal_L24"/>
    <property type="match status" value="1"/>
</dbReference>
<dbReference type="SMART" id="SM00739">
    <property type="entry name" value="KOW"/>
    <property type="match status" value="1"/>
</dbReference>
<dbReference type="SUPFAM" id="SSF50104">
    <property type="entry name" value="Translation proteins SH3-like domain"/>
    <property type="match status" value="1"/>
</dbReference>
<dbReference type="PROSITE" id="PS01108">
    <property type="entry name" value="RIBOSOMAL_L24"/>
    <property type="match status" value="1"/>
</dbReference>
<feature type="chain" id="PRO_0000241611" description="Large ribosomal subunit protein uL24">
    <location>
        <begin position="1"/>
        <end position="103"/>
    </location>
</feature>
<proteinExistence type="inferred from homology"/>
<comment type="function">
    <text evidence="1">One of two assembly initiator proteins, it binds directly to the 5'-end of the 23S rRNA, where it nucleates assembly of the 50S subunit.</text>
</comment>
<comment type="function">
    <text evidence="1">One of the proteins that surrounds the polypeptide exit tunnel on the outside of the subunit.</text>
</comment>
<comment type="subunit">
    <text evidence="1">Part of the 50S ribosomal subunit.</text>
</comment>
<comment type="similarity">
    <text evidence="1">Belongs to the universal ribosomal protein uL24 family.</text>
</comment>
<name>RL24_LATSS</name>